<reference key="1">
    <citation type="journal article" date="1997" name="Nature">
        <title>The nucleotide sequence of Saccharomyces cerevisiae chromosome XII.</title>
        <authorList>
            <person name="Johnston M."/>
            <person name="Hillier L.W."/>
            <person name="Riles L."/>
            <person name="Albermann K."/>
            <person name="Andre B."/>
            <person name="Ansorge W."/>
            <person name="Benes V."/>
            <person name="Brueckner M."/>
            <person name="Delius H."/>
            <person name="Dubois E."/>
            <person name="Duesterhoeft A."/>
            <person name="Entian K.-D."/>
            <person name="Floeth M."/>
            <person name="Goffeau A."/>
            <person name="Hebling U."/>
            <person name="Heumann K."/>
            <person name="Heuss-Neitzel D."/>
            <person name="Hilbert H."/>
            <person name="Hilger F."/>
            <person name="Kleine K."/>
            <person name="Koetter P."/>
            <person name="Louis E.J."/>
            <person name="Messenguy F."/>
            <person name="Mewes H.-W."/>
            <person name="Miosga T."/>
            <person name="Moestl D."/>
            <person name="Mueller-Auer S."/>
            <person name="Nentwich U."/>
            <person name="Obermaier B."/>
            <person name="Piravandi E."/>
            <person name="Pohl T.M."/>
            <person name="Portetelle D."/>
            <person name="Purnelle B."/>
            <person name="Rechmann S."/>
            <person name="Rieger M."/>
            <person name="Rinke M."/>
            <person name="Rose M."/>
            <person name="Scharfe M."/>
            <person name="Scherens B."/>
            <person name="Scholler P."/>
            <person name="Schwager C."/>
            <person name="Schwarz S."/>
            <person name="Underwood A.P."/>
            <person name="Urrestarazu L.A."/>
            <person name="Vandenbol M."/>
            <person name="Verhasselt P."/>
            <person name="Vierendeels F."/>
            <person name="Voet M."/>
            <person name="Volckaert G."/>
            <person name="Voss H."/>
            <person name="Wambutt R."/>
            <person name="Wedler E."/>
            <person name="Wedler H."/>
            <person name="Zimmermann F.K."/>
            <person name="Zollner A."/>
            <person name="Hani J."/>
            <person name="Hoheisel J.D."/>
        </authorList>
    </citation>
    <scope>NUCLEOTIDE SEQUENCE [LARGE SCALE GENOMIC DNA]</scope>
    <source>
        <strain>ATCC 204508 / S288c</strain>
    </source>
</reference>
<reference key="2">
    <citation type="journal article" date="2014" name="G3 (Bethesda)">
        <title>The reference genome sequence of Saccharomyces cerevisiae: Then and now.</title>
        <authorList>
            <person name="Engel S.R."/>
            <person name="Dietrich F.S."/>
            <person name="Fisk D.G."/>
            <person name="Binkley G."/>
            <person name="Balakrishnan R."/>
            <person name="Costanzo M.C."/>
            <person name="Dwight S.S."/>
            <person name="Hitz B.C."/>
            <person name="Karra K."/>
            <person name="Nash R.S."/>
            <person name="Weng S."/>
            <person name="Wong E.D."/>
            <person name="Lloyd P."/>
            <person name="Skrzypek M.S."/>
            <person name="Miyasato S.R."/>
            <person name="Simison M."/>
            <person name="Cherry J.M."/>
        </authorList>
    </citation>
    <scope>GENOME REANNOTATION</scope>
    <source>
        <strain>ATCC 204508 / S288c</strain>
    </source>
</reference>
<reference key="3">
    <citation type="journal article" date="2003" name="Nature">
        <title>Global analysis of protein localization in budding yeast.</title>
        <authorList>
            <person name="Huh W.-K."/>
            <person name="Falvo J.V."/>
            <person name="Gerke L.C."/>
            <person name="Carroll A.S."/>
            <person name="Howson R.W."/>
            <person name="Weissman J.S."/>
            <person name="O'Shea E.K."/>
        </authorList>
    </citation>
    <scope>SUBCELLULAR LOCATION [LARGE SCALE ANALYSIS]</scope>
</reference>
<reference key="4">
    <citation type="journal article" date="2003" name="Nature">
        <title>Global analysis of protein expression in yeast.</title>
        <authorList>
            <person name="Ghaemmaghami S."/>
            <person name="Huh W.-K."/>
            <person name="Bower K."/>
            <person name="Howson R.W."/>
            <person name="Belle A."/>
            <person name="Dephoure N."/>
            <person name="O'Shea E.K."/>
            <person name="Weissman J.S."/>
        </authorList>
    </citation>
    <scope>LEVEL OF PROTEIN EXPRESSION [LARGE SCALE ANALYSIS]</scope>
</reference>
<reference key="5">
    <citation type="journal article" date="2006" name="J. Proteome Res.">
        <title>Toward the complete yeast mitochondrial proteome: multidimensional separation techniques for mitochondrial proteomics.</title>
        <authorList>
            <person name="Reinders J."/>
            <person name="Zahedi R.P."/>
            <person name="Pfanner N."/>
            <person name="Meisinger C."/>
            <person name="Sickmann A."/>
        </authorList>
    </citation>
    <scope>SUBCELLULAR LOCATION [LARGE SCALE ANALYSIS]</scope>
    <scope>IDENTIFICATION BY MASS SPECTROMETRY</scope>
</reference>
<reference key="6">
    <citation type="journal article" date="2015" name="Cell Rep.">
        <title>Organization of mitochondrial gene expression in two distinct ribosome-containing assemblies.</title>
        <authorList>
            <person name="Kehrein K."/>
            <person name="Schilling R."/>
            <person name="Moller-Hergt B.V."/>
            <person name="Wurm C.A."/>
            <person name="Jakobs S."/>
            <person name="Lamkemeyer T."/>
            <person name="Langer T."/>
            <person name="Ott M."/>
        </authorList>
    </citation>
    <scope>FUNCTION</scope>
    <scope>SUBUNIT</scope>
</reference>
<reference key="7">
    <citation type="journal article" date="2015" name="J. Biol. Chem.">
        <title>Identification of Coq11, a new coenzyme Q biosynthetic protein in the CoQ-synthome in Saccharomyces cerevisiae.</title>
        <authorList>
            <person name="Allan C.M."/>
            <person name="Awad A.M."/>
            <person name="Johnson J.S."/>
            <person name="Shirasaki D.I."/>
            <person name="Wang C."/>
            <person name="Blaby-Haas C.E."/>
            <person name="Merchant S.S."/>
            <person name="Loo J.A."/>
            <person name="Clarke C.F."/>
        </authorList>
    </citation>
    <scope>FUNCTION</scope>
    <scope>SUBUNIT</scope>
    <scope>DISRUPTION PHENOTYPE</scope>
</reference>
<dbReference type="EMBL" id="U17243">
    <property type="protein sequence ID" value="AAB67336.1"/>
    <property type="molecule type" value="Genomic_DNA"/>
</dbReference>
<dbReference type="EMBL" id="BK006945">
    <property type="protein sequence ID" value="DAA09602.1"/>
    <property type="molecule type" value="Genomic_DNA"/>
</dbReference>
<dbReference type="PIR" id="S50375">
    <property type="entry name" value="S50375"/>
</dbReference>
<dbReference type="RefSeq" id="NP_013393.1">
    <property type="nucleotide sequence ID" value="NM_001182178.1"/>
</dbReference>
<dbReference type="SMR" id="Q05892"/>
<dbReference type="BioGRID" id="31556">
    <property type="interactions" value="214"/>
</dbReference>
<dbReference type="DIP" id="DIP-4742N"/>
<dbReference type="FunCoup" id="Q05892">
    <property type="interactions" value="155"/>
</dbReference>
<dbReference type="IntAct" id="Q05892">
    <property type="interactions" value="3"/>
</dbReference>
<dbReference type="MINT" id="Q05892"/>
<dbReference type="STRING" id="4932.YLR290C"/>
<dbReference type="PaxDb" id="4932-YLR290C"/>
<dbReference type="PeptideAtlas" id="Q05892"/>
<dbReference type="EnsemblFungi" id="YLR290C_mRNA">
    <property type="protein sequence ID" value="YLR290C"/>
    <property type="gene ID" value="YLR290C"/>
</dbReference>
<dbReference type="GeneID" id="850997"/>
<dbReference type="KEGG" id="sce:YLR290C"/>
<dbReference type="AGR" id="SGD:S000004281"/>
<dbReference type="SGD" id="S000004281">
    <property type="gene designation" value="COQ11"/>
</dbReference>
<dbReference type="VEuPathDB" id="FungiDB:YLR290C"/>
<dbReference type="eggNOG" id="KOG4288">
    <property type="taxonomic scope" value="Eukaryota"/>
</dbReference>
<dbReference type="GeneTree" id="ENSGT00390000006865"/>
<dbReference type="HOGENOM" id="CLU_055314_1_0_1"/>
<dbReference type="InParanoid" id="Q05892"/>
<dbReference type="OMA" id="WERADIF"/>
<dbReference type="OrthoDB" id="276721at2759"/>
<dbReference type="BioCyc" id="YEAST:G3O-32385-MONOMER"/>
<dbReference type="UniPathway" id="UPA00232"/>
<dbReference type="BioGRID-ORCS" id="850997">
    <property type="hits" value="1 hit in 10 CRISPR screens"/>
</dbReference>
<dbReference type="ChiTaRS" id="COQ11">
    <property type="organism name" value="yeast"/>
</dbReference>
<dbReference type="PRO" id="PR:Q05892"/>
<dbReference type="Proteomes" id="UP000002311">
    <property type="component" value="Chromosome XII"/>
</dbReference>
<dbReference type="RNAct" id="Q05892">
    <property type="molecule type" value="protein"/>
</dbReference>
<dbReference type="GO" id="GO:0005739">
    <property type="term" value="C:mitochondrion"/>
    <property type="evidence" value="ECO:0000314"/>
    <property type="project" value="SGD"/>
</dbReference>
<dbReference type="GO" id="GO:0044877">
    <property type="term" value="F:protein-containing complex binding"/>
    <property type="evidence" value="ECO:0000318"/>
    <property type="project" value="GO_Central"/>
</dbReference>
<dbReference type="GO" id="GO:0006744">
    <property type="term" value="P:ubiquinone biosynthetic process"/>
    <property type="evidence" value="ECO:0000315"/>
    <property type="project" value="SGD"/>
</dbReference>
<dbReference type="Gene3D" id="3.40.50.720">
    <property type="entry name" value="NAD(P)-binding Rossmann-like Domain"/>
    <property type="match status" value="1"/>
</dbReference>
<dbReference type="InterPro" id="IPR051207">
    <property type="entry name" value="ComplexI_NDUFA9_subunit"/>
</dbReference>
<dbReference type="InterPro" id="IPR001509">
    <property type="entry name" value="Epimerase_deHydtase"/>
</dbReference>
<dbReference type="InterPro" id="IPR036291">
    <property type="entry name" value="NAD(P)-bd_dom_sf"/>
</dbReference>
<dbReference type="PANTHER" id="PTHR12126:SF16">
    <property type="entry name" value="MIOREX COMPLEX COMPONENT 2"/>
    <property type="match status" value="1"/>
</dbReference>
<dbReference type="PANTHER" id="PTHR12126">
    <property type="entry name" value="NADH-UBIQUINONE OXIDOREDUCTASE 39 KDA SUBUNIT-RELATED"/>
    <property type="match status" value="1"/>
</dbReference>
<dbReference type="Pfam" id="PF01370">
    <property type="entry name" value="Epimerase"/>
    <property type="match status" value="1"/>
</dbReference>
<dbReference type="SUPFAM" id="SSF51735">
    <property type="entry name" value="NAD(P)-binding Rossmann-fold domains"/>
    <property type="match status" value="1"/>
</dbReference>
<gene>
    <name evidence="6" type="primary">COQ11</name>
    <name evidence="7" type="synonym">MRX2</name>
    <name evidence="11" type="ordered locus">YLR290C</name>
</gene>
<keyword id="KW-0496">Mitochondrion</keyword>
<keyword id="KW-1185">Reference proteome</keyword>
<keyword id="KW-0831">Ubiquinone biosynthesis</keyword>
<organism>
    <name type="scientific">Saccharomyces cerevisiae (strain ATCC 204508 / S288c)</name>
    <name type="common">Baker's yeast</name>
    <dbReference type="NCBI Taxonomy" id="559292"/>
    <lineage>
        <taxon>Eukaryota</taxon>
        <taxon>Fungi</taxon>
        <taxon>Dikarya</taxon>
        <taxon>Ascomycota</taxon>
        <taxon>Saccharomycotina</taxon>
        <taxon>Saccharomycetes</taxon>
        <taxon>Saccharomycetales</taxon>
        <taxon>Saccharomycetaceae</taxon>
        <taxon>Saccharomyces</taxon>
    </lineage>
</organism>
<name>COQ11_YEAST</name>
<comment type="function">
    <text evidence="4 5">Component of MIOREX complexes, large expressome-like assemblies of ribosomes with factors involved in all the steps of post-transcriptional gene expression (PubMed:25683707). Component of a multi-subunit COQ enzyme complex required for coenzyme Q biosynthesis (PubMed:25631044).</text>
</comment>
<comment type="pathway">
    <text evidence="9">Cofactor biosynthesis; ubiquinone biosynthesis.</text>
</comment>
<comment type="subunit">
    <text evidence="4 5">Associates with the mitochondrial ribosome (PubMed:25683707). Component of a multi-subunit COQ enzyme complex (PubMed:25631044).</text>
</comment>
<comment type="subcellular location">
    <subcellularLocation>
        <location evidence="1 3">Mitochondrion</location>
    </subcellularLocation>
</comment>
<comment type="disruption phenotype">
    <text evidence="4">Shows impaired de novo coenzyme Q biosynthesis.</text>
</comment>
<comment type="miscellaneous">
    <text evidence="2">Present with 1470 molecules/cell in log phase SD medium.</text>
</comment>
<comment type="similarity">
    <text evidence="8">Belongs to the NAD(P)-dependent epimerase/dehydratase family.</text>
</comment>
<proteinExistence type="evidence at protein level"/>
<accession>Q05892</accession>
<accession>D6VYT6</accession>
<evidence type="ECO:0000269" key="1">
    <source>
    </source>
</evidence>
<evidence type="ECO:0000269" key="2">
    <source>
    </source>
</evidence>
<evidence type="ECO:0000269" key="3">
    <source>
    </source>
</evidence>
<evidence type="ECO:0000269" key="4">
    <source>
    </source>
</evidence>
<evidence type="ECO:0000269" key="5">
    <source>
    </source>
</evidence>
<evidence type="ECO:0000303" key="6">
    <source>
    </source>
</evidence>
<evidence type="ECO:0000303" key="7">
    <source>
    </source>
</evidence>
<evidence type="ECO:0000305" key="8"/>
<evidence type="ECO:0000305" key="9">
    <source>
    </source>
</evidence>
<evidence type="ECO:0000305" key="10">
    <source>
    </source>
</evidence>
<evidence type="ECO:0000312" key="11">
    <source>
        <dbReference type="SGD" id="S000004281"/>
    </source>
</evidence>
<protein>
    <recommendedName>
        <fullName evidence="10">MIOREX complex component 2</fullName>
    </recommendedName>
    <alternativeName>
        <fullName evidence="7">Mitochondrial organization of gene expression protein 2</fullName>
    </alternativeName>
</protein>
<sequence>MIPKLIVFGGNGFLGKRICQEAVTSGYQVVSVSRSGKAPHSNELNDKQWMQEVQWTAADIFKPDSYHELLNNATNVVHSLGILLENENYKQTLSKSPTYDSKSRLLSFGAGPNPLKKSSPYFTYEMMNKQSAIILADTFKQKILKKSKKEQEKANQRSFTYISADKGFPLIPSGYINSKREAEIELEKMQRYFRPIIVRPGFMFDEHRNAIGPRSFIHTALELLYCGNKFLLRNKLQLLNDLIRPTVSTQQVSKSVLKNIENPDFKGVVTLEEILKA</sequence>
<feature type="chain" id="PRO_0000268626" description="MIOREX complex component 2">
    <location>
        <begin position="1"/>
        <end position="277"/>
    </location>
</feature>